<sequence length="54" mass="6065">MLQLVEESSKDAGIRXLVMLDEQGEQLERVVDEREQMAISGGFIRIMEKMLGSG</sequence>
<name>SNP25_RABIT</name>
<dbReference type="PIR" id="A44823">
    <property type="entry name" value="A44823"/>
</dbReference>
<dbReference type="PIR" id="C44823">
    <property type="entry name" value="C44823"/>
</dbReference>
<dbReference type="PIR" id="F44823">
    <property type="entry name" value="F44823"/>
</dbReference>
<dbReference type="eggNOG" id="KOG3065">
    <property type="taxonomic scope" value="Eukaryota"/>
</dbReference>
<dbReference type="InParanoid" id="P55820"/>
<dbReference type="Proteomes" id="UP000001811">
    <property type="component" value="Unplaced"/>
</dbReference>
<dbReference type="GO" id="GO:0005737">
    <property type="term" value="C:cytoplasm"/>
    <property type="evidence" value="ECO:0000250"/>
    <property type="project" value="UniProtKB"/>
</dbReference>
<dbReference type="GO" id="GO:0016020">
    <property type="term" value="C:membrane"/>
    <property type="evidence" value="ECO:0000250"/>
    <property type="project" value="UniProtKB"/>
</dbReference>
<dbReference type="GO" id="GO:0043005">
    <property type="term" value="C:neuron projection"/>
    <property type="evidence" value="ECO:0007669"/>
    <property type="project" value="UniProtKB-KW"/>
</dbReference>
<dbReference type="GO" id="GO:0048471">
    <property type="term" value="C:perinuclear region of cytoplasm"/>
    <property type="evidence" value="ECO:0007669"/>
    <property type="project" value="UniProtKB-SubCell"/>
</dbReference>
<dbReference type="GO" id="GO:0001917">
    <property type="term" value="C:photoreceptor inner segment"/>
    <property type="evidence" value="ECO:0007669"/>
    <property type="project" value="UniProtKB-SubCell"/>
</dbReference>
<dbReference type="GO" id="GO:0005886">
    <property type="term" value="C:plasma membrane"/>
    <property type="evidence" value="ECO:0007669"/>
    <property type="project" value="UniProtKB-SubCell"/>
</dbReference>
<dbReference type="GO" id="GO:0031201">
    <property type="term" value="C:SNARE complex"/>
    <property type="evidence" value="ECO:0000250"/>
    <property type="project" value="UniProtKB"/>
</dbReference>
<dbReference type="GO" id="GO:0045202">
    <property type="term" value="C:synapse"/>
    <property type="evidence" value="ECO:0007669"/>
    <property type="project" value="UniProtKB-SubCell"/>
</dbReference>
<dbReference type="Gene3D" id="1.20.5.110">
    <property type="match status" value="1"/>
</dbReference>
<dbReference type="SUPFAM" id="SSF58038">
    <property type="entry name" value="SNARE fusion complex"/>
    <property type="match status" value="1"/>
</dbReference>
<organism>
    <name type="scientific">Oryctolagus cuniculus</name>
    <name type="common">Rabbit</name>
    <dbReference type="NCBI Taxonomy" id="9986"/>
    <lineage>
        <taxon>Eukaryota</taxon>
        <taxon>Metazoa</taxon>
        <taxon>Chordata</taxon>
        <taxon>Craniata</taxon>
        <taxon>Vertebrata</taxon>
        <taxon>Euteleostomi</taxon>
        <taxon>Mammalia</taxon>
        <taxon>Eutheria</taxon>
        <taxon>Euarchontoglires</taxon>
        <taxon>Glires</taxon>
        <taxon>Lagomorpha</taxon>
        <taxon>Leporidae</taxon>
        <taxon>Oryctolagus</taxon>
    </lineage>
</organism>
<accession>P55820</accession>
<protein>
    <recommendedName>
        <fullName>Synaptosomal-associated protein 25</fullName>
        <shortName>SNAP-25</shortName>
    </recommendedName>
    <alternativeName>
        <fullName>Super protein</fullName>
        <shortName>SUP</shortName>
    </alternativeName>
    <alternativeName>
        <fullName>Synaptosomal-associated 25 kDa protein</fullName>
    </alternativeName>
</protein>
<comment type="function">
    <text evidence="2">t-SNARE involved in the molecular regulation of neurotransmitter release. May play an important role in the synaptic function of specific neuronal systems. Associates with proteins involved in vesicle docking and membrane fusion. Regulates plasma membrane recycling through its interaction with CENPF. Modulates the gating characteristics of the delayed rectifier voltage-dependent potassium channel KCNB1 in pancreatic beta cells.</text>
</comment>
<comment type="subunit">
    <text evidence="1 2">Part of the SNARE core complex containing SNAP25, VAMP2 and STX1A; this complex binds CPLX1. Found in a complex containing SYT1, SV2B and syntaxin-1 (By similarity). Found in a ternary complex with STX1A and VAMP8 (By similarity). Interacts with HSC70 and with SYT9, forming a complex with DNAJC5 (By similarity). The interaction with SYT9 is inhibited in presence of calcium (By similarity). Isoform 1 and isoform 2 interact with BLOC1S6. Interacts with CENPF. Interacts with EQTN. Interacts with HGS. Interacts with KCNB1 (via N-terminus); reduces the voltage-dependent potassium channel KCNB1 activity in pancreatic beta cells. Interacts with OTOF. Interacts with RIMS1. Interacts with SNAPIN. Interacts with STXBP6. Interacts with TRIM9. Interacts with ZDHHC13 (via ANK repeats). Interacts with ZDHHC17 (via ANK repeats). Associates with the BLOC-1 complex. Interacts with PLCL1 (via C2 domain). Interacts with PRRT2; this interaction may impair the formation of the SNARE complex (By similarity). Interacts with alpha-synuclein/SNCA (By similarity). Interacts with PRPH2 (By similarity). Interacts with ROM1 (By similarity). Interacts with STX3 (By similarity).</text>
</comment>
<comment type="subcellular location">
    <subcellularLocation>
        <location evidence="1">Cytoplasm</location>
        <location evidence="1">Perinuclear region</location>
    </subcellularLocation>
    <subcellularLocation>
        <location evidence="2">Cell membrane</location>
        <topology evidence="1">Lipid-anchor</topology>
    </subcellularLocation>
    <subcellularLocation>
        <location evidence="1">Synapse</location>
        <location evidence="1">Synaptosome</location>
    </subcellularLocation>
    <subcellularLocation>
        <location evidence="1">Photoreceptor inner segment</location>
    </subcellularLocation>
    <text evidence="1 2">Membrane association requires palmitoylation. Expressed throughout cytoplasm, concentrating at the perinuclear region. Colocalizes with KCNB1 at the cell membrane (By similarity). Colocalizes with PLCL1 at the cell membrane (By similarity).</text>
</comment>
<comment type="PTM">
    <text>The N-terminus is blocked.</text>
</comment>
<comment type="similarity">
    <text evidence="3">Belongs to the SNAP-25 family.</text>
</comment>
<proteinExistence type="evidence at protein level"/>
<gene>
    <name type="primary">SNAP25</name>
    <name type="synonym">SNAP</name>
</gene>
<keyword id="KW-1003">Cell membrane</keyword>
<keyword id="KW-0963">Cytoplasm</keyword>
<keyword id="KW-0903">Direct protein sequencing</keyword>
<keyword id="KW-0449">Lipoprotein</keyword>
<keyword id="KW-0472">Membrane</keyword>
<keyword id="KW-1185">Reference proteome</keyword>
<keyword id="KW-0770">Synapse</keyword>
<keyword id="KW-0771">Synaptosome</keyword>
<evidence type="ECO:0000250" key="1">
    <source>
        <dbReference type="UniProtKB" id="P60879"/>
    </source>
</evidence>
<evidence type="ECO:0000250" key="2">
    <source>
        <dbReference type="UniProtKB" id="P60881"/>
    </source>
</evidence>
<evidence type="ECO:0000305" key="3"/>
<feature type="chain" id="PRO_0000213591" description="Synaptosomal-associated protein 25">
    <location>
        <begin position="1"/>
        <end position="54"/>
    </location>
</feature>
<feature type="non-consecutive residues" evidence="3">
    <location>
        <begin position="29"/>
        <end position="30"/>
    </location>
</feature>
<feature type="non-consecutive residues" evidence="3">
    <location>
        <begin position="45"/>
        <end position="46"/>
    </location>
</feature>
<feature type="non-consecutive residues" evidence="3">
    <location>
        <begin position="49"/>
        <end position="50"/>
    </location>
</feature>
<feature type="non-terminal residue">
    <location>
        <position position="1"/>
    </location>
</feature>
<reference key="1">
    <citation type="journal article" date="1991" name="J. Neurosci.">
        <title>The major 35S-methionine-labeled rapidly transported protein (superprotein) is identical to SNAP-25, a protein of synaptic terminals.</title>
        <authorList>
            <person name="Loewy A."/>
            <person name="Liu W.-S."/>
            <person name="Baitinger C."/>
            <person name="Willard M.B."/>
        </authorList>
    </citation>
    <scope>PROTEIN SEQUENCE</scope>
    <scope>CHARACTERIZATION</scope>
    <source>
        <strain>New Zealand white</strain>
        <tissue>Eye</tissue>
        <tissue>Spinal cord</tissue>
    </source>
</reference>